<proteinExistence type="inferred from homology"/>
<gene>
    <name evidence="1" type="primary">mukB</name>
    <name type="ordered locus">VCM66_1654</name>
</gene>
<name>MUKB_VIBCM</name>
<organism>
    <name type="scientific">Vibrio cholerae serotype O1 (strain M66-2)</name>
    <dbReference type="NCBI Taxonomy" id="579112"/>
    <lineage>
        <taxon>Bacteria</taxon>
        <taxon>Pseudomonadati</taxon>
        <taxon>Pseudomonadota</taxon>
        <taxon>Gammaproteobacteria</taxon>
        <taxon>Vibrionales</taxon>
        <taxon>Vibrionaceae</taxon>
        <taxon>Vibrio</taxon>
    </lineage>
</organism>
<evidence type="ECO:0000255" key="1">
    <source>
        <dbReference type="HAMAP-Rule" id="MF_01800"/>
    </source>
</evidence>
<evidence type="ECO:0000256" key="2">
    <source>
        <dbReference type="SAM" id="MobiDB-lite"/>
    </source>
</evidence>
<accession>C3LN37</accession>
<sequence length="1491" mass="169960">MIERGKYQSLTMINWNGFFARTFDIDNLVTTLSGGNGAGKSTTMAAFITALIPDQSLLHFRNTTEAGSSQASRDKGLYGKLQAGACYAALDVVNSRNQRLLFAVKLQQVAGRDKKVDIKPFLIQGLPSHVKPTDVLVETVSDKHARVRQINEVKDAVGQIEGAHFKSFPSIVDYHAQMFEFGVIPKKLRNSSDRSKFYRLIEASLYGGISSAITRSLRDYLLPQNGGVKKAFQDMESALRENRMTLEAIKTTQADRDLFKHLITESTNYVAADYMRHANDRRNKVGQTLVLRGELFSSRETLIEQNSLLNRVHEELELLVEQESALEQDYQGASDHLQLVQNALRQQEKIERYQEDLEELNFRLEEQMMVVEEANERVMQAEERAIISEEEVDSLKSQLADYQQALDVQQTRALQYQQAVQALDKARRLLDKSELTAESAQALATQLKAEQETRTSELLALKHKLDMSSAAAQQFNHAFELVKRVLGEVARSEAAKQAQQVIRQAREAQNVVQNEAQWQAQQRDLERQLEQQRSVRELATQYHKQHRVVLDDAATVELERERHSALLEELETEQENCREQRGQLRHQEQELQTQIARFESIAPAWIKANDALETLREQSGAELADSQSVMAHMQQVLELEKAQSMAKDKLAERRTKLDSEIERLASPGGSNDPRLKGLADTLGGVLLSEIYDDITIDDAPYFSAMYGPARHAIVVSDLSGIKEKLVELDDCPEDLYLIEGDVDAFDDSSFNAEELEGAVCVQLNQRQMRYSRFPAIPLFGRAAREQRLELLREERDDVVEQHAKASFDSQKLQRLYASFNQFVAMHLQVAFDADPEQALATARDKRNQLLRSISEFEAQEQQLRSQLQASKQALAALDKLAPQMGLLDEETLEARYHELEEKLQQLSEAKAFIAAHGRTISELEKVAAVLDADPEQFDALEQQYQQADQALQQLKAQIFALSDLLERRHHFAYSDSVDLLNQSSELSEQLKAKLVQAESERTRSREELKQAQAQLSQYNQLLASLKSSHQAKLETVQEFKQELQEFGVHADEGAIERAQRRRDELQERLHTSRSRKSEYERTITSTELEMKALVKRMKKVEKDYQDLRTFVVNAKAGWCSVLRLARQNDVERRLHKRELAYLSADELRSMSDKSLGALRLAVANNEDLRDALRQSEDNSRPERKVLFYIAVYQHLRERIRQDIIRTDDPVEAIEEMEVELARLTEELTQREQRLAISSDSVASIIRKTIQREQNRIRMLNQGLSNISFGQVNGVRLNVKVRESHEILLAGLSEQQAQHKDLFESARYTFSEAMAKLFQRVNPHIDMGQRSPQVLGEELLDYRNYLELSVEVNRGSDGWLQAESGALSTGEAIGTGQSILLMVVQSWEEESRRLRSKDIVPCRLLFLDEAARLDAKSIATLFELCERLDMQLLIAAPENISPEKGTTYKLVRKVFKDHEHVHVVGLRGFAQTEKPKTAEQKFAEELAGELTE</sequence>
<reference key="1">
    <citation type="journal article" date="2008" name="PLoS ONE">
        <title>A recalibrated molecular clock and independent origins for the cholera pandemic clones.</title>
        <authorList>
            <person name="Feng L."/>
            <person name="Reeves P.R."/>
            <person name="Lan R."/>
            <person name="Ren Y."/>
            <person name="Gao C."/>
            <person name="Zhou Z."/>
            <person name="Ren Y."/>
            <person name="Cheng J."/>
            <person name="Wang W."/>
            <person name="Wang J."/>
            <person name="Qian W."/>
            <person name="Li D."/>
            <person name="Wang L."/>
        </authorList>
    </citation>
    <scope>NUCLEOTIDE SEQUENCE [LARGE SCALE GENOMIC DNA]</scope>
    <source>
        <strain>M66-2</strain>
    </source>
</reference>
<protein>
    <recommendedName>
        <fullName evidence="1">Chromosome partition protein MukB</fullName>
    </recommendedName>
    <alternativeName>
        <fullName evidence="1">Structural maintenance of chromosome-related protein</fullName>
    </alternativeName>
</protein>
<feature type="chain" id="PRO_1000187491" description="Chromosome partition protein MukB">
    <location>
        <begin position="1"/>
        <end position="1491"/>
    </location>
</feature>
<feature type="region of interest" description="Flexible hinge" evidence="1">
    <location>
        <begin position="667"/>
        <end position="784"/>
    </location>
</feature>
<feature type="region of interest" description="Disordered" evidence="2">
    <location>
        <begin position="1059"/>
        <end position="1080"/>
    </location>
</feature>
<feature type="coiled-coil region" evidence="1">
    <location>
        <begin position="302"/>
        <end position="450"/>
    </location>
</feature>
<feature type="coiled-coil region" evidence="1">
    <location>
        <begin position="490"/>
        <end position="600"/>
    </location>
</feature>
<feature type="coiled-coil region" evidence="1">
    <location>
        <begin position="836"/>
        <end position="1109"/>
    </location>
</feature>
<feature type="coiled-coil region" evidence="1">
    <location>
        <begin position="1210"/>
        <end position="1239"/>
    </location>
</feature>
<feature type="binding site" evidence="1">
    <location>
        <begin position="34"/>
        <end position="41"/>
    </location>
    <ligand>
        <name>ATP</name>
        <dbReference type="ChEBI" id="CHEBI:30616"/>
    </ligand>
</feature>
<comment type="function">
    <text evidence="1">Plays a central role in chromosome condensation, segregation and cell cycle progression. Functions as a homodimer, which is essential for chromosome partition. Involved in negative DNA supercoiling in vivo, and by this means organize and compact chromosomes. May achieve or facilitate chromosome segregation by condensation DNA from both sides of a centrally located replisome during cell division.</text>
</comment>
<comment type="subunit">
    <text evidence="1">Homodimerization via its hinge domain. Binds to DNA via its C-terminal region. Interacts, and probably forms a ternary complex, with MukE and MukF via its C-terminal region. The complex formation is stimulated by calcium or magnesium. Interacts with tubulin-related protein FtsZ.</text>
</comment>
<comment type="subcellular location">
    <subcellularLocation>
        <location evidence="1">Cytoplasm</location>
        <location evidence="1">Nucleoid</location>
    </subcellularLocation>
    <text evidence="1">Restricted to the nucleoid region.</text>
</comment>
<comment type="domain">
    <text evidence="1">The hinge domain, which separates the large intramolecular coiled coil regions, allows the homodimerization, forming a V-shaped homodimer.</text>
</comment>
<comment type="similarity">
    <text evidence="1">Belongs to the SMC family. MukB subfamily.</text>
</comment>
<keyword id="KW-0067">ATP-binding</keyword>
<keyword id="KW-0131">Cell cycle</keyword>
<keyword id="KW-0132">Cell division</keyword>
<keyword id="KW-0159">Chromosome partition</keyword>
<keyword id="KW-0175">Coiled coil</keyword>
<keyword id="KW-0963">Cytoplasm</keyword>
<keyword id="KW-0226">DNA condensation</keyword>
<keyword id="KW-0238">DNA-binding</keyword>
<keyword id="KW-0547">Nucleotide-binding</keyword>
<dbReference type="EMBL" id="CP001233">
    <property type="protein sequence ID" value="ACP05963.1"/>
    <property type="molecule type" value="Genomic_DNA"/>
</dbReference>
<dbReference type="RefSeq" id="WP_000572788.1">
    <property type="nucleotide sequence ID" value="NC_012578.1"/>
</dbReference>
<dbReference type="SMR" id="C3LN37"/>
<dbReference type="KEGG" id="vcm:VCM66_1654"/>
<dbReference type="HOGENOM" id="CLU_004430_0_0_6"/>
<dbReference type="Proteomes" id="UP000001217">
    <property type="component" value="Chromosome I"/>
</dbReference>
<dbReference type="GO" id="GO:0005737">
    <property type="term" value="C:cytoplasm"/>
    <property type="evidence" value="ECO:0007669"/>
    <property type="project" value="UniProtKB-UniRule"/>
</dbReference>
<dbReference type="GO" id="GO:0009295">
    <property type="term" value="C:nucleoid"/>
    <property type="evidence" value="ECO:0007669"/>
    <property type="project" value="UniProtKB-SubCell"/>
</dbReference>
<dbReference type="GO" id="GO:0005524">
    <property type="term" value="F:ATP binding"/>
    <property type="evidence" value="ECO:0007669"/>
    <property type="project" value="UniProtKB-UniRule"/>
</dbReference>
<dbReference type="GO" id="GO:0003677">
    <property type="term" value="F:DNA binding"/>
    <property type="evidence" value="ECO:0007669"/>
    <property type="project" value="UniProtKB-UniRule"/>
</dbReference>
<dbReference type="GO" id="GO:0051301">
    <property type="term" value="P:cell division"/>
    <property type="evidence" value="ECO:0007669"/>
    <property type="project" value="UniProtKB-KW"/>
</dbReference>
<dbReference type="GO" id="GO:0030261">
    <property type="term" value="P:chromosome condensation"/>
    <property type="evidence" value="ECO:0007669"/>
    <property type="project" value="UniProtKB-KW"/>
</dbReference>
<dbReference type="GO" id="GO:0007059">
    <property type="term" value="P:chromosome segregation"/>
    <property type="evidence" value="ECO:0007669"/>
    <property type="project" value="UniProtKB-UniRule"/>
</dbReference>
<dbReference type="GO" id="GO:0006260">
    <property type="term" value="P:DNA replication"/>
    <property type="evidence" value="ECO:0007669"/>
    <property type="project" value="UniProtKB-UniRule"/>
</dbReference>
<dbReference type="FunFam" id="3.30.70.3500:FF:000001">
    <property type="entry name" value="Chromosome partition protein MukB"/>
    <property type="match status" value="1"/>
</dbReference>
<dbReference type="FunFam" id="3.40.1140.10:FF:000001">
    <property type="entry name" value="Chromosome partition protein MukB"/>
    <property type="match status" value="1"/>
</dbReference>
<dbReference type="FunFam" id="3.40.1140.10:FF:000002">
    <property type="entry name" value="Chromosome partition protein MukB"/>
    <property type="match status" value="1"/>
</dbReference>
<dbReference type="Gene3D" id="1.20.58.850">
    <property type="match status" value="1"/>
</dbReference>
<dbReference type="Gene3D" id="3.40.1140.10">
    <property type="match status" value="2"/>
</dbReference>
<dbReference type="Gene3D" id="1.20.5.420">
    <property type="entry name" value="Immunoglobulin FC, subunit C"/>
    <property type="match status" value="1"/>
</dbReference>
<dbReference type="Gene3D" id="3.30.70.3500">
    <property type="entry name" value="MukB, hinge domain"/>
    <property type="match status" value="1"/>
</dbReference>
<dbReference type="HAMAP" id="MF_01800">
    <property type="entry name" value="MukB"/>
    <property type="match status" value="1"/>
</dbReference>
<dbReference type="InterPro" id="IPR012090">
    <property type="entry name" value="MukB"/>
</dbReference>
<dbReference type="InterPro" id="IPR050308">
    <property type="entry name" value="MukB/SMC"/>
</dbReference>
<dbReference type="InterPro" id="IPR032520">
    <property type="entry name" value="MukB_hinge"/>
</dbReference>
<dbReference type="InterPro" id="IPR042501">
    <property type="entry name" value="MukB_hinge_sf"/>
</dbReference>
<dbReference type="InterPro" id="IPR007406">
    <property type="entry name" value="MukB_N_dom"/>
</dbReference>
<dbReference type="InterPro" id="IPR027417">
    <property type="entry name" value="P-loop_NTPase"/>
</dbReference>
<dbReference type="NCBIfam" id="NF003422">
    <property type="entry name" value="PRK04863.1"/>
    <property type="match status" value="1"/>
</dbReference>
<dbReference type="PANTHER" id="PTHR42963">
    <property type="entry name" value="CHROMOSOME PARTITION PROTEIN MUKB"/>
    <property type="match status" value="1"/>
</dbReference>
<dbReference type="PANTHER" id="PTHR42963:SF1">
    <property type="entry name" value="DUF4476 DOMAIN-CONTAINING PROTEIN"/>
    <property type="match status" value="1"/>
</dbReference>
<dbReference type="Pfam" id="PF04310">
    <property type="entry name" value="MukB"/>
    <property type="match status" value="1"/>
</dbReference>
<dbReference type="Pfam" id="PF16330">
    <property type="entry name" value="MukB_hinge"/>
    <property type="match status" value="1"/>
</dbReference>
<dbReference type="Pfam" id="PF13558">
    <property type="entry name" value="SbcC_Walker_B"/>
    <property type="match status" value="1"/>
</dbReference>
<dbReference type="PIRSF" id="PIRSF005246">
    <property type="entry name" value="MukB"/>
    <property type="match status" value="1"/>
</dbReference>
<dbReference type="SUPFAM" id="SSF52540">
    <property type="entry name" value="P-loop containing nucleoside triphosphate hydrolases"/>
    <property type="match status" value="2"/>
</dbReference>